<name>DXR_YERPN</name>
<comment type="function">
    <text evidence="1">Catalyzes the NADPH-dependent rearrangement and reduction of 1-deoxy-D-xylulose-5-phosphate (DXP) to 2-C-methyl-D-erythritol 4-phosphate (MEP).</text>
</comment>
<comment type="catalytic activity">
    <reaction evidence="1">
        <text>2-C-methyl-D-erythritol 4-phosphate + NADP(+) = 1-deoxy-D-xylulose 5-phosphate + NADPH + H(+)</text>
        <dbReference type="Rhea" id="RHEA:13717"/>
        <dbReference type="ChEBI" id="CHEBI:15378"/>
        <dbReference type="ChEBI" id="CHEBI:57783"/>
        <dbReference type="ChEBI" id="CHEBI:57792"/>
        <dbReference type="ChEBI" id="CHEBI:58262"/>
        <dbReference type="ChEBI" id="CHEBI:58349"/>
        <dbReference type="EC" id="1.1.1.267"/>
    </reaction>
    <physiologicalReaction direction="right-to-left" evidence="1">
        <dbReference type="Rhea" id="RHEA:13719"/>
    </physiologicalReaction>
</comment>
<comment type="cofactor">
    <cofactor evidence="1">
        <name>Mg(2+)</name>
        <dbReference type="ChEBI" id="CHEBI:18420"/>
    </cofactor>
    <cofactor evidence="1">
        <name>Mn(2+)</name>
        <dbReference type="ChEBI" id="CHEBI:29035"/>
    </cofactor>
</comment>
<comment type="pathway">
    <text evidence="1">Isoprenoid biosynthesis; isopentenyl diphosphate biosynthesis via DXP pathway; isopentenyl diphosphate from 1-deoxy-D-xylulose 5-phosphate: step 1/6.</text>
</comment>
<comment type="subunit">
    <text evidence="1">Homodimer.</text>
</comment>
<comment type="similarity">
    <text evidence="1">Belongs to the DXR family.</text>
</comment>
<reference key="1">
    <citation type="journal article" date="2006" name="J. Bacteriol.">
        <title>Complete genome sequence of Yersinia pestis strains Antiqua and Nepal516: evidence of gene reduction in an emerging pathogen.</title>
        <authorList>
            <person name="Chain P.S.G."/>
            <person name="Hu P."/>
            <person name="Malfatti S.A."/>
            <person name="Radnedge L."/>
            <person name="Larimer F."/>
            <person name="Vergez L.M."/>
            <person name="Worsham P."/>
            <person name="Chu M.C."/>
            <person name="Andersen G.L."/>
        </authorList>
    </citation>
    <scope>NUCLEOTIDE SEQUENCE [LARGE SCALE GENOMIC DNA]</scope>
    <source>
        <strain>Nepal516</strain>
    </source>
</reference>
<reference key="2">
    <citation type="submission" date="2009-04" db="EMBL/GenBank/DDBJ databases">
        <title>Yersinia pestis Nepal516A whole genome shotgun sequencing project.</title>
        <authorList>
            <person name="Plunkett G. III"/>
            <person name="Anderson B.D."/>
            <person name="Baumler D.J."/>
            <person name="Burland V."/>
            <person name="Cabot E.L."/>
            <person name="Glasner J.D."/>
            <person name="Mau B."/>
            <person name="Neeno-Eckwall E."/>
            <person name="Perna N.T."/>
            <person name="Munk A.C."/>
            <person name="Tapia R."/>
            <person name="Green L.D."/>
            <person name="Rogers Y.C."/>
            <person name="Detter J.C."/>
            <person name="Bruce D.C."/>
            <person name="Brettin T.S."/>
        </authorList>
    </citation>
    <scope>NUCLEOTIDE SEQUENCE [LARGE SCALE GENOMIC DNA]</scope>
    <source>
        <strain>Nepal516</strain>
    </source>
</reference>
<organism>
    <name type="scientific">Yersinia pestis bv. Antiqua (strain Nepal516)</name>
    <dbReference type="NCBI Taxonomy" id="377628"/>
    <lineage>
        <taxon>Bacteria</taxon>
        <taxon>Pseudomonadati</taxon>
        <taxon>Pseudomonadota</taxon>
        <taxon>Gammaproteobacteria</taxon>
        <taxon>Enterobacterales</taxon>
        <taxon>Yersiniaceae</taxon>
        <taxon>Yersinia</taxon>
    </lineage>
</organism>
<protein>
    <recommendedName>
        <fullName evidence="1">1-deoxy-D-xylulose 5-phosphate reductoisomerase</fullName>
        <shortName evidence="1">DXP reductoisomerase</shortName>
        <ecNumber evidence="1">1.1.1.267</ecNumber>
    </recommendedName>
    <alternativeName>
        <fullName evidence="1">1-deoxyxylulose-5-phosphate reductoisomerase</fullName>
    </alternativeName>
    <alternativeName>
        <fullName evidence="1">2-C-methyl-D-erythritol 4-phosphate synthase</fullName>
    </alternativeName>
</protein>
<proteinExistence type="inferred from homology"/>
<keyword id="KW-0414">Isoprene biosynthesis</keyword>
<keyword id="KW-0464">Manganese</keyword>
<keyword id="KW-0479">Metal-binding</keyword>
<keyword id="KW-0521">NADP</keyword>
<keyword id="KW-0560">Oxidoreductase</keyword>
<feature type="chain" id="PRO_1000020327" description="1-deoxy-D-xylulose 5-phosphate reductoisomerase">
    <location>
        <begin position="1"/>
        <end position="398"/>
    </location>
</feature>
<feature type="binding site" evidence="1">
    <location>
        <position position="10"/>
    </location>
    <ligand>
        <name>NADPH</name>
        <dbReference type="ChEBI" id="CHEBI:57783"/>
    </ligand>
</feature>
<feature type="binding site" evidence="1">
    <location>
        <position position="11"/>
    </location>
    <ligand>
        <name>NADPH</name>
        <dbReference type="ChEBI" id="CHEBI:57783"/>
    </ligand>
</feature>
<feature type="binding site" evidence="1">
    <location>
        <position position="12"/>
    </location>
    <ligand>
        <name>NADPH</name>
        <dbReference type="ChEBI" id="CHEBI:57783"/>
    </ligand>
</feature>
<feature type="binding site" evidence="1">
    <location>
        <position position="13"/>
    </location>
    <ligand>
        <name>NADPH</name>
        <dbReference type="ChEBI" id="CHEBI:57783"/>
    </ligand>
</feature>
<feature type="binding site" evidence="1">
    <location>
        <position position="36"/>
    </location>
    <ligand>
        <name>NADPH</name>
        <dbReference type="ChEBI" id="CHEBI:57783"/>
    </ligand>
</feature>
<feature type="binding site" evidence="1">
    <location>
        <position position="37"/>
    </location>
    <ligand>
        <name>NADPH</name>
        <dbReference type="ChEBI" id="CHEBI:57783"/>
    </ligand>
</feature>
<feature type="binding site" evidence="1">
    <location>
        <position position="38"/>
    </location>
    <ligand>
        <name>NADPH</name>
        <dbReference type="ChEBI" id="CHEBI:57783"/>
    </ligand>
</feature>
<feature type="binding site" evidence="1">
    <location>
        <position position="124"/>
    </location>
    <ligand>
        <name>NADPH</name>
        <dbReference type="ChEBI" id="CHEBI:57783"/>
    </ligand>
</feature>
<feature type="binding site" evidence="1">
    <location>
        <position position="125"/>
    </location>
    <ligand>
        <name>1-deoxy-D-xylulose 5-phosphate</name>
        <dbReference type="ChEBI" id="CHEBI:57792"/>
    </ligand>
</feature>
<feature type="binding site" evidence="1">
    <location>
        <position position="126"/>
    </location>
    <ligand>
        <name>NADPH</name>
        <dbReference type="ChEBI" id="CHEBI:57783"/>
    </ligand>
</feature>
<feature type="binding site" evidence="1">
    <location>
        <position position="150"/>
    </location>
    <ligand>
        <name>Mn(2+)</name>
        <dbReference type="ChEBI" id="CHEBI:29035"/>
    </ligand>
</feature>
<feature type="binding site" evidence="1">
    <location>
        <position position="151"/>
    </location>
    <ligand>
        <name>1-deoxy-D-xylulose 5-phosphate</name>
        <dbReference type="ChEBI" id="CHEBI:57792"/>
    </ligand>
</feature>
<feature type="binding site" evidence="1">
    <location>
        <position position="152"/>
    </location>
    <ligand>
        <name>1-deoxy-D-xylulose 5-phosphate</name>
        <dbReference type="ChEBI" id="CHEBI:57792"/>
    </ligand>
</feature>
<feature type="binding site" evidence="1">
    <location>
        <position position="152"/>
    </location>
    <ligand>
        <name>Mn(2+)</name>
        <dbReference type="ChEBI" id="CHEBI:29035"/>
    </ligand>
</feature>
<feature type="binding site" evidence="1">
    <location>
        <position position="186"/>
    </location>
    <ligand>
        <name>1-deoxy-D-xylulose 5-phosphate</name>
        <dbReference type="ChEBI" id="CHEBI:57792"/>
    </ligand>
</feature>
<feature type="binding site" evidence="1">
    <location>
        <position position="209"/>
    </location>
    <ligand>
        <name>1-deoxy-D-xylulose 5-phosphate</name>
        <dbReference type="ChEBI" id="CHEBI:57792"/>
    </ligand>
</feature>
<feature type="binding site" evidence="1">
    <location>
        <position position="215"/>
    </location>
    <ligand>
        <name>NADPH</name>
        <dbReference type="ChEBI" id="CHEBI:57783"/>
    </ligand>
</feature>
<feature type="binding site" evidence="1">
    <location>
        <position position="222"/>
    </location>
    <ligand>
        <name>1-deoxy-D-xylulose 5-phosphate</name>
        <dbReference type="ChEBI" id="CHEBI:57792"/>
    </ligand>
</feature>
<feature type="binding site" evidence="1">
    <location>
        <position position="227"/>
    </location>
    <ligand>
        <name>1-deoxy-D-xylulose 5-phosphate</name>
        <dbReference type="ChEBI" id="CHEBI:57792"/>
    </ligand>
</feature>
<feature type="binding site" evidence="1">
    <location>
        <position position="228"/>
    </location>
    <ligand>
        <name>1-deoxy-D-xylulose 5-phosphate</name>
        <dbReference type="ChEBI" id="CHEBI:57792"/>
    </ligand>
</feature>
<feature type="binding site" evidence="1">
    <location>
        <position position="231"/>
    </location>
    <ligand>
        <name>1-deoxy-D-xylulose 5-phosphate</name>
        <dbReference type="ChEBI" id="CHEBI:57792"/>
    </ligand>
</feature>
<feature type="binding site" evidence="1">
    <location>
        <position position="231"/>
    </location>
    <ligand>
        <name>Mn(2+)</name>
        <dbReference type="ChEBI" id="CHEBI:29035"/>
    </ligand>
</feature>
<sequence length="398" mass="43115">MKQLTILGSTGSIGNSTLSVVRANPELFKVTALVAGRNVREMAQQCLEFSPRYAAMSDEHSAKSLRLLLAEQGSDTEVYSGETAACELAALDDVDQVMAAIVGIAGLPSTLAAIRAGKQVLLANKESLITCGKLFMDEVKRSRAQLLPIDSEHNAIFQSLPERIQRQLGYSSLNENGVSRIILTGSGGPFRETPLSQFSDVTPDQACAHPNWSMGRKISVDSATMMNKGLEYIEARWLFNASAEQIEVVLHPQSVIHSMVRYHDGSILAQMGTPDMRTPIAHAMAYPMRVSSGVAPLDFCKVGALTFTTPDYQRYPCLKLAIDACNAGQAATTALNAANEISVMAFLDSKIRFTDIEVINRTVVEGLLLSEPTSVEEVLVIDRKARDVAAQVIAKLNN</sequence>
<evidence type="ECO:0000255" key="1">
    <source>
        <dbReference type="HAMAP-Rule" id="MF_00183"/>
    </source>
</evidence>
<accession>Q1CFF1</accession>
<accession>C4GWX8</accession>
<gene>
    <name evidence="1" type="primary">dxr</name>
    <name type="ordered locus">YPN_2952</name>
    <name type="ORF">YP516_3342</name>
</gene>
<dbReference type="EC" id="1.1.1.267" evidence="1"/>
<dbReference type="EMBL" id="CP000305">
    <property type="protein sequence ID" value="ABG19279.1"/>
    <property type="molecule type" value="Genomic_DNA"/>
</dbReference>
<dbReference type="EMBL" id="ACNQ01000017">
    <property type="protein sequence ID" value="EEO75428.1"/>
    <property type="molecule type" value="Genomic_DNA"/>
</dbReference>
<dbReference type="SMR" id="Q1CFF1"/>
<dbReference type="KEGG" id="ypn:YPN_2952"/>
<dbReference type="HOGENOM" id="CLU_035714_0_1_6"/>
<dbReference type="UniPathway" id="UPA00056">
    <property type="reaction ID" value="UER00092"/>
</dbReference>
<dbReference type="Proteomes" id="UP000008936">
    <property type="component" value="Chromosome"/>
</dbReference>
<dbReference type="GO" id="GO:0030604">
    <property type="term" value="F:1-deoxy-D-xylulose-5-phosphate reductoisomerase activity"/>
    <property type="evidence" value="ECO:0007669"/>
    <property type="project" value="UniProtKB-UniRule"/>
</dbReference>
<dbReference type="GO" id="GO:0030145">
    <property type="term" value="F:manganese ion binding"/>
    <property type="evidence" value="ECO:0007669"/>
    <property type="project" value="TreeGrafter"/>
</dbReference>
<dbReference type="GO" id="GO:0070402">
    <property type="term" value="F:NADPH binding"/>
    <property type="evidence" value="ECO:0007669"/>
    <property type="project" value="InterPro"/>
</dbReference>
<dbReference type="GO" id="GO:0051484">
    <property type="term" value="P:isopentenyl diphosphate biosynthetic process, methylerythritol 4-phosphate pathway involved in terpenoid biosynthetic process"/>
    <property type="evidence" value="ECO:0007669"/>
    <property type="project" value="TreeGrafter"/>
</dbReference>
<dbReference type="FunFam" id="1.10.1740.10:FF:000004">
    <property type="entry name" value="1-deoxy-D-xylulose 5-phosphate reductoisomerase"/>
    <property type="match status" value="1"/>
</dbReference>
<dbReference type="FunFam" id="3.40.50.720:FF:000045">
    <property type="entry name" value="1-deoxy-D-xylulose 5-phosphate reductoisomerase"/>
    <property type="match status" value="1"/>
</dbReference>
<dbReference type="Gene3D" id="1.10.1740.10">
    <property type="match status" value="1"/>
</dbReference>
<dbReference type="Gene3D" id="3.40.50.720">
    <property type="entry name" value="NAD(P)-binding Rossmann-like Domain"/>
    <property type="match status" value="1"/>
</dbReference>
<dbReference type="HAMAP" id="MF_00183">
    <property type="entry name" value="DXP_reductoisom"/>
    <property type="match status" value="1"/>
</dbReference>
<dbReference type="InterPro" id="IPR003821">
    <property type="entry name" value="DXP_reductoisomerase"/>
</dbReference>
<dbReference type="InterPro" id="IPR013644">
    <property type="entry name" value="DXP_reductoisomerase_C"/>
</dbReference>
<dbReference type="InterPro" id="IPR013512">
    <property type="entry name" value="DXP_reductoisomerase_N"/>
</dbReference>
<dbReference type="InterPro" id="IPR026877">
    <property type="entry name" value="DXPR_C"/>
</dbReference>
<dbReference type="InterPro" id="IPR036169">
    <property type="entry name" value="DXPR_C_sf"/>
</dbReference>
<dbReference type="InterPro" id="IPR036291">
    <property type="entry name" value="NAD(P)-bd_dom_sf"/>
</dbReference>
<dbReference type="NCBIfam" id="TIGR00243">
    <property type="entry name" value="Dxr"/>
    <property type="match status" value="1"/>
</dbReference>
<dbReference type="NCBIfam" id="NF003938">
    <property type="entry name" value="PRK05447.1-1"/>
    <property type="match status" value="1"/>
</dbReference>
<dbReference type="NCBIfam" id="NF009114">
    <property type="entry name" value="PRK12464.1"/>
    <property type="match status" value="1"/>
</dbReference>
<dbReference type="PANTHER" id="PTHR30525">
    <property type="entry name" value="1-DEOXY-D-XYLULOSE 5-PHOSPHATE REDUCTOISOMERASE"/>
    <property type="match status" value="1"/>
</dbReference>
<dbReference type="PANTHER" id="PTHR30525:SF0">
    <property type="entry name" value="1-DEOXY-D-XYLULOSE 5-PHOSPHATE REDUCTOISOMERASE, CHLOROPLASTIC"/>
    <property type="match status" value="1"/>
</dbReference>
<dbReference type="Pfam" id="PF08436">
    <property type="entry name" value="DXP_redisom_C"/>
    <property type="match status" value="1"/>
</dbReference>
<dbReference type="Pfam" id="PF02670">
    <property type="entry name" value="DXP_reductoisom"/>
    <property type="match status" value="1"/>
</dbReference>
<dbReference type="Pfam" id="PF13288">
    <property type="entry name" value="DXPR_C"/>
    <property type="match status" value="1"/>
</dbReference>
<dbReference type="PIRSF" id="PIRSF006205">
    <property type="entry name" value="Dxp_reductismrs"/>
    <property type="match status" value="1"/>
</dbReference>
<dbReference type="SUPFAM" id="SSF69055">
    <property type="entry name" value="1-deoxy-D-xylulose-5-phosphate reductoisomerase, C-terminal domain"/>
    <property type="match status" value="1"/>
</dbReference>
<dbReference type="SUPFAM" id="SSF55347">
    <property type="entry name" value="Glyceraldehyde-3-phosphate dehydrogenase-like, C-terminal domain"/>
    <property type="match status" value="1"/>
</dbReference>
<dbReference type="SUPFAM" id="SSF51735">
    <property type="entry name" value="NAD(P)-binding Rossmann-fold domains"/>
    <property type="match status" value="1"/>
</dbReference>